<keyword id="KW-0150">Chloroplast</keyword>
<keyword id="KW-0249">Electron transport</keyword>
<keyword id="KW-0349">Heme</keyword>
<keyword id="KW-0408">Iron</keyword>
<keyword id="KW-0472">Membrane</keyword>
<keyword id="KW-0479">Metal-binding</keyword>
<keyword id="KW-0602">Photosynthesis</keyword>
<keyword id="KW-0604">Photosystem II</keyword>
<keyword id="KW-0934">Plastid</keyword>
<keyword id="KW-0793">Thylakoid</keyword>
<keyword id="KW-0812">Transmembrane</keyword>
<keyword id="KW-1133">Transmembrane helix</keyword>
<keyword id="KW-0813">Transport</keyword>
<reference key="1">
    <citation type="journal article" date="2003" name="Plant Syst. Evol.">
        <title>The chloroplast genome of the 'basal' angiosperm Calycanthus fertilis -- structural and phylogenetic analyses.</title>
        <authorList>
            <person name="Goremykin V."/>
            <person name="Hirsch-Ernst K.I."/>
            <person name="Woelfl S."/>
            <person name="Hellwig F.H."/>
        </authorList>
    </citation>
    <scope>NUCLEOTIDE SEQUENCE [LARGE SCALE GENOMIC DNA]</scope>
</reference>
<dbReference type="EMBL" id="AJ428413">
    <property type="protein sequence ID" value="CAD28738.1"/>
    <property type="molecule type" value="Genomic_DNA"/>
</dbReference>
<dbReference type="RefSeq" id="NP_862771.1">
    <property type="nucleotide sequence ID" value="NC_004993.1"/>
</dbReference>
<dbReference type="SMR" id="Q7YJV8"/>
<dbReference type="GeneID" id="2598009"/>
<dbReference type="GO" id="GO:0009535">
    <property type="term" value="C:chloroplast thylakoid membrane"/>
    <property type="evidence" value="ECO:0007669"/>
    <property type="project" value="UniProtKB-SubCell"/>
</dbReference>
<dbReference type="GO" id="GO:0009539">
    <property type="term" value="C:photosystem II reaction center"/>
    <property type="evidence" value="ECO:0007669"/>
    <property type="project" value="InterPro"/>
</dbReference>
<dbReference type="GO" id="GO:0009055">
    <property type="term" value="F:electron transfer activity"/>
    <property type="evidence" value="ECO:0007669"/>
    <property type="project" value="UniProtKB-UniRule"/>
</dbReference>
<dbReference type="GO" id="GO:0020037">
    <property type="term" value="F:heme binding"/>
    <property type="evidence" value="ECO:0007669"/>
    <property type="project" value="InterPro"/>
</dbReference>
<dbReference type="GO" id="GO:0005506">
    <property type="term" value="F:iron ion binding"/>
    <property type="evidence" value="ECO:0007669"/>
    <property type="project" value="UniProtKB-UniRule"/>
</dbReference>
<dbReference type="GO" id="GO:0009767">
    <property type="term" value="P:photosynthetic electron transport chain"/>
    <property type="evidence" value="ECO:0007669"/>
    <property type="project" value="InterPro"/>
</dbReference>
<dbReference type="Gene3D" id="1.20.5.860">
    <property type="entry name" value="Photosystem II cytochrome b559, alpha subunit"/>
    <property type="match status" value="1"/>
</dbReference>
<dbReference type="HAMAP" id="MF_00642">
    <property type="entry name" value="PSII_PsbE"/>
    <property type="match status" value="1"/>
</dbReference>
<dbReference type="InterPro" id="IPR006217">
    <property type="entry name" value="PSII_cyt_b559_asu"/>
</dbReference>
<dbReference type="InterPro" id="IPR037025">
    <property type="entry name" value="PSII_cyt_b559_asu_sf"/>
</dbReference>
<dbReference type="InterPro" id="IPR006216">
    <property type="entry name" value="PSII_cyt_b559_CS"/>
</dbReference>
<dbReference type="InterPro" id="IPR013081">
    <property type="entry name" value="PSII_cyt_b559_N"/>
</dbReference>
<dbReference type="InterPro" id="IPR013082">
    <property type="entry name" value="PSII_cytb559_asu_lum"/>
</dbReference>
<dbReference type="NCBIfam" id="TIGR01332">
    <property type="entry name" value="cyt_b559_alpha"/>
    <property type="match status" value="1"/>
</dbReference>
<dbReference type="PANTHER" id="PTHR33391">
    <property type="entry name" value="CYTOCHROME B559 SUBUNIT BETA-RELATED"/>
    <property type="match status" value="1"/>
</dbReference>
<dbReference type="PANTHER" id="PTHR33391:SF9">
    <property type="entry name" value="CYTOCHROME B559 SUBUNIT BETA-RELATED"/>
    <property type="match status" value="1"/>
</dbReference>
<dbReference type="Pfam" id="PF00283">
    <property type="entry name" value="Cytochrom_B559"/>
    <property type="match status" value="1"/>
</dbReference>
<dbReference type="Pfam" id="PF00284">
    <property type="entry name" value="Cytochrom_B559a"/>
    <property type="match status" value="1"/>
</dbReference>
<dbReference type="PIRSF" id="PIRSF000036">
    <property type="entry name" value="PsbE"/>
    <property type="match status" value="1"/>
</dbReference>
<dbReference type="SUPFAM" id="SSF161045">
    <property type="entry name" value="Cytochrome b559 subunits"/>
    <property type="match status" value="1"/>
</dbReference>
<dbReference type="PROSITE" id="PS00537">
    <property type="entry name" value="CYTOCHROME_B559"/>
    <property type="match status" value="1"/>
</dbReference>
<name>PSBE_CALFG</name>
<proteinExistence type="inferred from homology"/>
<comment type="function">
    <text evidence="1">This b-type cytochrome is tightly associated with the reaction center of photosystem II (PSII). PSII is a light-driven water:plastoquinone oxidoreductase that uses light energy to abstract electrons from H(2)O, generating O(2) and a proton gradient subsequently used for ATP formation. It consists of a core antenna complex that captures photons, and an electron transfer chain that converts photonic excitation into a charge separation.</text>
</comment>
<comment type="cofactor">
    <cofactor evidence="1">
        <name>heme b</name>
        <dbReference type="ChEBI" id="CHEBI:60344"/>
    </cofactor>
    <text evidence="1">With its partner (PsbF) binds heme. PSII binds additional chlorophylls, carotenoids and specific lipids.</text>
</comment>
<comment type="subunit">
    <text evidence="1">Heterodimer of an alpha subunit and a beta subunit. PSII is composed of 1 copy each of membrane proteins PsbA, PsbB, PsbC, PsbD, PsbE, PsbF, PsbH, PsbI, PsbJ, PsbK, PsbL, PsbM, PsbT, PsbX, PsbY, PsbZ, Psb30/Ycf12, at least 3 peripheral proteins of the oxygen-evolving complex and a large number of cofactors. It forms dimeric complexes.</text>
</comment>
<comment type="subcellular location">
    <subcellularLocation>
        <location evidence="1">Plastid</location>
        <location evidence="1">Chloroplast thylakoid membrane</location>
        <topology evidence="1">Single-pass membrane protein</topology>
    </subcellularLocation>
</comment>
<comment type="similarity">
    <text evidence="1">Belongs to the PsbE/PsbF family.</text>
</comment>
<sequence>MSGSTGERSFADIITSIRYWVIHSITIPSLFIAGWLFVSTGLAYDVFGSPRPNEYFTESRQGIPLITGRFDPLAQLDEFSRSF</sequence>
<accession>Q7YJV8</accession>
<organism>
    <name type="scientific">Calycanthus floridus var. glaucus</name>
    <name type="common">Eastern sweetshrub</name>
    <name type="synonym">Calycanthus fertilis var. ferax</name>
    <dbReference type="NCBI Taxonomy" id="212734"/>
    <lineage>
        <taxon>Eukaryota</taxon>
        <taxon>Viridiplantae</taxon>
        <taxon>Streptophyta</taxon>
        <taxon>Embryophyta</taxon>
        <taxon>Tracheophyta</taxon>
        <taxon>Spermatophyta</taxon>
        <taxon>Magnoliopsida</taxon>
        <taxon>Magnoliidae</taxon>
        <taxon>Laurales</taxon>
        <taxon>Calycanthaceae</taxon>
        <taxon>Calycanthus</taxon>
    </lineage>
</organism>
<evidence type="ECO:0000255" key="1">
    <source>
        <dbReference type="HAMAP-Rule" id="MF_00642"/>
    </source>
</evidence>
<gene>
    <name evidence="1" type="primary">psbE</name>
</gene>
<geneLocation type="chloroplast"/>
<feature type="chain" id="PRO_0000200301" description="Cytochrome b559 subunit alpha">
    <location>
        <begin position="1"/>
        <end position="83"/>
    </location>
</feature>
<feature type="transmembrane region" description="Helical" evidence="1">
    <location>
        <begin position="21"/>
        <end position="35"/>
    </location>
</feature>
<feature type="binding site" description="axial binding residue" evidence="1">
    <location>
        <position position="23"/>
    </location>
    <ligand>
        <name>heme</name>
        <dbReference type="ChEBI" id="CHEBI:30413"/>
        <note>ligand shared with beta subunit</note>
    </ligand>
    <ligandPart>
        <name>Fe</name>
        <dbReference type="ChEBI" id="CHEBI:18248"/>
    </ligandPart>
</feature>
<protein>
    <recommendedName>
        <fullName evidence="1">Cytochrome b559 subunit alpha</fullName>
    </recommendedName>
    <alternativeName>
        <fullName evidence="1">PSII reaction center subunit V</fullName>
    </alternativeName>
</protein>